<reference key="1">
    <citation type="journal article" date="2011" name="Cell">
        <title>Insight into structure and assembly of the nuclear pore complex by utilizing the genome of a eukaryotic thermophile.</title>
        <authorList>
            <person name="Amlacher S."/>
            <person name="Sarges P."/>
            <person name="Flemming D."/>
            <person name="van Noort V."/>
            <person name="Kunze R."/>
            <person name="Devos D.P."/>
            <person name="Arumugam M."/>
            <person name="Bork P."/>
            <person name="Hurt E."/>
        </authorList>
    </citation>
    <scope>NUCLEOTIDE SEQUENCE [LARGE SCALE GENOMIC DNA]</scope>
    <source>
        <strain>DSM 1495 / CBS 144.50 / IMI 039719</strain>
    </source>
</reference>
<evidence type="ECO:0000250" key="1">
    <source>
        <dbReference type="UniProtKB" id="Q12176"/>
    </source>
</evidence>
<evidence type="ECO:0000256" key="2">
    <source>
        <dbReference type="SAM" id="MobiDB-lite"/>
    </source>
</evidence>
<evidence type="ECO:0000305" key="3"/>
<organism>
    <name type="scientific">Chaetomium thermophilum (strain DSM 1495 / CBS 144.50 / IMI 039719)</name>
    <name type="common">Thermochaetoides thermophila</name>
    <dbReference type="NCBI Taxonomy" id="759272"/>
    <lineage>
        <taxon>Eukaryota</taxon>
        <taxon>Fungi</taxon>
        <taxon>Dikarya</taxon>
        <taxon>Ascomycota</taxon>
        <taxon>Pezizomycotina</taxon>
        <taxon>Sordariomycetes</taxon>
        <taxon>Sordariomycetidae</taxon>
        <taxon>Sordariales</taxon>
        <taxon>Chaetomiaceae</taxon>
        <taxon>Thermochaetoides</taxon>
    </lineage>
</organism>
<gene>
    <name type="primary">NOC1</name>
    <name type="ORF">CTHT_0059330</name>
</gene>
<comment type="function">
    <text evidence="1">Required for 60S ribosomal subunit synthesis.</text>
</comment>
<comment type="subunit">
    <text evidence="1">Interacts with NOC2. Forms a nucleolar complex with NOC2 that binds to 90S and 66S pre-ribosomes.</text>
</comment>
<comment type="subcellular location">
    <subcellularLocation>
        <location evidence="1">Nucleus</location>
        <location evidence="1">Nucleolus</location>
    </subcellularLocation>
</comment>
<comment type="similarity">
    <text evidence="3">Belongs to the CBF/MAK21 family.</text>
</comment>
<comment type="sequence caution" evidence="3">
    <conflict type="erroneous gene model prediction">
        <sequence resource="EMBL-CDS" id="EGS17921"/>
    </conflict>
</comment>
<protein>
    <recommendedName>
        <fullName>Ribosome biogenesis protein NOC1</fullName>
    </recommendedName>
    <alternativeName>
        <fullName>Nucleolar complex protein 1</fullName>
    </alternativeName>
</protein>
<proteinExistence type="inferred from homology"/>
<accession>G0SEQ5</accession>
<keyword id="KW-0539">Nucleus</keyword>
<keyword id="KW-1185">Reference proteome</keyword>
<keyword id="KW-0690">Ribosome biogenesis</keyword>
<sequence>MGLKRAARQQRDIGKPAFDEEALVELTGKIDKTLPAVEQKIAGKRKRQNASDDGRGSKRRQTHPTEAEEHRDSHAAAKDKANRILLEEIIALGGDEKDLELVADVDSGNEGGGGPSQPKISSEQSLDQSFKDELAKFAASLGFHQFHNREDLNTEDEASPDEDAVGSTTDVSSDSDEGGGQEEMEKEDVDSFSDNEEKVTEKVDSGEAKIIPQDTKKGKQFRNLIIDPRPDWHAFPLDELPASRPDHPGKYSASIANLKSYAESLLEEDTANYQSAQAHSSTRKFMSTIMSSGTLSDKISALTLSIQESPLHNRKAFESLITLAGKKNRGQAIAALGALVDLLGNGAVLPDDRRLRPFGGQPALFGALQGSASQTWVAGQTLPGKLTKAHLVMWAYEDWLKAAYFRIIQLLEVWCSDEIEYSRSRALDFVFGLLKNKPEQEANLLRLLVNKLGDRERKIASRASYLLLQLLNVHPGMKGIVIGTVEQEVLLKPGQSLRTKYTAINTLNQTILSTREPSIADKLLRIYFDMFLALLKSGVLGNVGALNGDKRDGGTPRKKSNPSGSLTVGNEQDVAQKLVSALLTGVNRAIPFATTEDSTLEKHLDTLFRITHSSNFNTSIQALMLIQQLATSKQLAVDRFYRTLYESLLDPRLVTSSKHALYLNLIFRAMKNDADVRRVKAFVKRLIQILTLHQPSFTCGVLFLISELQKTFPDLRTLLDDPEEADDDGEEVYKDVCEDGTLDNVETQGVTSSFVSPATAYDGRKRDPEHSNAHRSCLWELTPLLSHYHPSVGIFARNLLSPQQSLPKPDLAHHTLMHFLDKFVYRNPKAEETKRGGSIMQPVLASGGTSRIVVSSKAAAKQQQSVNSASFWNLKPEQVLAEDVFFHEYFTRIGKPGKMTRKRDETKREFGSGDETGDEDEIWDALVKSKPDVEGPNVDDDSDADLGDFDYSDDEEDGSRTDGSMSDIGMDSDGFEGIFDDAGESDEQSSGEDEAPTKAKKGTATSGQKGRLSKKELKTLPTFASAEDYADILAAEDDGLDD</sequence>
<name>NOC1_CHATD</name>
<feature type="chain" id="PRO_0000435813" description="Ribosome biogenesis protein NOC1">
    <location>
        <begin position="1"/>
        <end position="1042"/>
    </location>
</feature>
<feature type="region of interest" description="Disordered" evidence="2">
    <location>
        <begin position="1"/>
        <end position="20"/>
    </location>
</feature>
<feature type="region of interest" description="Disordered" evidence="2">
    <location>
        <begin position="28"/>
        <end position="79"/>
    </location>
</feature>
<feature type="region of interest" description="Disordered" evidence="2">
    <location>
        <begin position="101"/>
        <end position="128"/>
    </location>
</feature>
<feature type="region of interest" description="Disordered" evidence="2">
    <location>
        <begin position="148"/>
        <end position="214"/>
    </location>
</feature>
<feature type="region of interest" description="Disordered" evidence="2">
    <location>
        <begin position="546"/>
        <end position="567"/>
    </location>
</feature>
<feature type="region of interest" description="Disordered" evidence="2">
    <location>
        <begin position="897"/>
        <end position="1020"/>
    </location>
</feature>
<feature type="compositionally biased region" description="Basic and acidic residues" evidence="2">
    <location>
        <begin position="9"/>
        <end position="18"/>
    </location>
</feature>
<feature type="compositionally biased region" description="Basic and acidic residues" evidence="2">
    <location>
        <begin position="63"/>
        <end position="79"/>
    </location>
</feature>
<feature type="compositionally biased region" description="Polar residues" evidence="2">
    <location>
        <begin position="118"/>
        <end position="128"/>
    </location>
</feature>
<feature type="compositionally biased region" description="Acidic residues" evidence="2">
    <location>
        <begin position="153"/>
        <end position="164"/>
    </location>
</feature>
<feature type="compositionally biased region" description="Acidic residues" evidence="2">
    <location>
        <begin position="173"/>
        <end position="194"/>
    </location>
</feature>
<feature type="compositionally biased region" description="Basic and acidic residues" evidence="2">
    <location>
        <begin position="195"/>
        <end position="207"/>
    </location>
</feature>
<feature type="compositionally biased region" description="Basic and acidic residues" evidence="2">
    <location>
        <begin position="902"/>
        <end position="911"/>
    </location>
</feature>
<feature type="compositionally biased region" description="Acidic residues" evidence="2">
    <location>
        <begin position="937"/>
        <end position="957"/>
    </location>
</feature>
<feature type="compositionally biased region" description="Low complexity" evidence="2">
    <location>
        <begin position="962"/>
        <end position="972"/>
    </location>
</feature>
<feature type="compositionally biased region" description="Acidic residues" evidence="2">
    <location>
        <begin position="978"/>
        <end position="994"/>
    </location>
</feature>
<dbReference type="EMBL" id="GL988046">
    <property type="protein sequence ID" value="EGS17921.1"/>
    <property type="status" value="ALT_SEQ"/>
    <property type="molecule type" value="Genomic_DNA"/>
</dbReference>
<dbReference type="RefSeq" id="XP_006696252.1">
    <property type="nucleotide sequence ID" value="XM_006696189.1"/>
</dbReference>
<dbReference type="SMR" id="G0SEQ5"/>
<dbReference type="STRING" id="759272.G0SEQ5"/>
<dbReference type="GeneID" id="18259971"/>
<dbReference type="KEGG" id="cthr:CTHT_0059330"/>
<dbReference type="eggNOG" id="KOG2038">
    <property type="taxonomic scope" value="Eukaryota"/>
</dbReference>
<dbReference type="HOGENOM" id="CLU_003417_0_0_1"/>
<dbReference type="OrthoDB" id="28947at2759"/>
<dbReference type="Proteomes" id="UP000008066">
    <property type="component" value="Unassembled WGS sequence"/>
</dbReference>
<dbReference type="GO" id="GO:0005730">
    <property type="term" value="C:nucleolus"/>
    <property type="evidence" value="ECO:0007669"/>
    <property type="project" value="UniProtKB-SubCell"/>
</dbReference>
<dbReference type="GO" id="GO:0042254">
    <property type="term" value="P:ribosome biogenesis"/>
    <property type="evidence" value="ECO:0007669"/>
    <property type="project" value="UniProtKB-KW"/>
</dbReference>
<dbReference type="Gene3D" id="1.25.10.10">
    <property type="entry name" value="Leucine-rich Repeat Variant"/>
    <property type="match status" value="1"/>
</dbReference>
<dbReference type="InterPro" id="IPR011989">
    <property type="entry name" value="ARM-like"/>
</dbReference>
<dbReference type="InterPro" id="IPR016024">
    <property type="entry name" value="ARM-type_fold"/>
</dbReference>
<dbReference type="InterPro" id="IPR005612">
    <property type="entry name" value="CCAAT-binding_factor"/>
</dbReference>
<dbReference type="InterPro" id="IPR040155">
    <property type="entry name" value="CEBPZ/Mak21-like"/>
</dbReference>
<dbReference type="PANTHER" id="PTHR12048">
    <property type="entry name" value="CCAAT-BINDING FACTOR-RELATED"/>
    <property type="match status" value="1"/>
</dbReference>
<dbReference type="PANTHER" id="PTHR12048:SF0">
    <property type="entry name" value="CCAAT_ENHANCER-BINDING PROTEIN ZETA"/>
    <property type="match status" value="1"/>
</dbReference>
<dbReference type="Pfam" id="PF03914">
    <property type="entry name" value="CBF"/>
    <property type="match status" value="1"/>
</dbReference>
<dbReference type="SUPFAM" id="SSF48371">
    <property type="entry name" value="ARM repeat"/>
    <property type="match status" value="1"/>
</dbReference>